<comment type="function">
    <text evidence="4 5">Transcription regulator (PubMed:18941117, PubMed:33833125). Plays a role in erythropoiesis, binding to promoters and activating transcription of embryonic alpha globin e1 hbae1.1 and microRNA mir-144, in erythroid progenitors; perhaps acting as part of a negative feedback loop with mir-144 (PubMed:18941117, PubMed:33833125). May coordinate repression of genes controlling myocardial differentiation and mitochondrial metabolism with positive modulation of cell proliferation genes (PubMed:33833125). Required for regeneration of the myocardium after injury, probably acting by stimulating renewal of preexisting cardiomyocytes in adult hearts (PubMed:33833125).</text>
</comment>
<comment type="subcellular location">
    <subcellularLocation>
        <location evidence="5">Cytoplasm</location>
        <location evidence="5">Cytosol</location>
    </subcellularLocation>
    <subcellularLocation>
        <location evidence="9 10">Nucleus</location>
    </subcellularLocation>
    <text evidence="5">Colocalizes with the cytosolic muscle marker troponin C.</text>
</comment>
<comment type="tissue specificity">
    <text evidence="5">Expressed in cardiomyocytes.</text>
</comment>
<comment type="developmental stage">
    <text evidence="3 4">First expressed in the inner cell mass (ICM) of embryos at 18 hpf (hours post fertilization) and continues to be expressed in the developing embryo until at least 48 hpf (PubMed:18941117). Expressed in the developing hematopoietic system, at 24 hpf and circulating primitive erythrocytes at 48 hpf (PubMed:11535513, PubMed:18941117). Expressed in the pronephros, and in circulating definitive erythrocytes in the heart lumen and vessels of the tail at 8 dpf (days post fertilization) (PubMed:11535513).</text>
</comment>
<comment type="induction">
    <text evidence="4 5">In adult heart myocardium upon injury (PubMed:33833125). Repressed in embryos by microRNA miR-144 (PubMed:18941117).</text>
</comment>
<comment type="disruption phenotype">
    <text evidence="4">Morpholino knockdown causes significant reduction in expression of embryonic alpha globin e1 hbae1.1 in 22 hpf (hours post fertilization) and 36 hpf embryos.</text>
</comment>
<comment type="similarity">
    <text evidence="8">Belongs to the krueppel C2H2-type zinc-finger protein family.</text>
</comment>
<dbReference type="EMBL" id="BX601645">
    <property type="status" value="NOT_ANNOTATED_CDS"/>
    <property type="molecule type" value="Genomic_DNA"/>
</dbReference>
<dbReference type="EMBL" id="BC162384">
    <property type="protein sequence ID" value="AAI62384.1"/>
    <property type="molecule type" value="mRNA"/>
</dbReference>
<dbReference type="EMBL" id="BC162393">
    <property type="protein sequence ID" value="AAI62393.1"/>
    <property type="molecule type" value="mRNA"/>
</dbReference>
<dbReference type="EMBL" id="AF392996">
    <property type="protein sequence ID" value="AAK76995.1"/>
    <property type="molecule type" value="mRNA"/>
</dbReference>
<dbReference type="RefSeq" id="NP_571011.1">
    <property type="nucleotide sequence ID" value="NM_130936.1"/>
</dbReference>
<dbReference type="SMR" id="Q90XE6"/>
<dbReference type="STRING" id="7955.ENSDARP00000020778"/>
<dbReference type="PaxDb" id="7955-ENSDARP00000020778"/>
<dbReference type="Ensembl" id="ENSDART00000011724">
    <property type="protein sequence ID" value="ENSDARP00000020778"/>
    <property type="gene ID" value="ENSDARG00000017400"/>
</dbReference>
<dbReference type="GeneID" id="30104"/>
<dbReference type="KEGG" id="dre:30104"/>
<dbReference type="AGR" id="ZFIN:ZDB-GENE-980526-55"/>
<dbReference type="CTD" id="10661"/>
<dbReference type="ZFIN" id="ZDB-GENE-980526-55">
    <property type="gene designation" value="klf1"/>
</dbReference>
<dbReference type="eggNOG" id="KOG1721">
    <property type="taxonomic scope" value="Eukaryota"/>
</dbReference>
<dbReference type="HOGENOM" id="CLU_067113_0_0_1"/>
<dbReference type="InParanoid" id="Q90XE6"/>
<dbReference type="OMA" id="ACWDMEL"/>
<dbReference type="OrthoDB" id="4748970at2759"/>
<dbReference type="PhylomeDB" id="Q90XE6"/>
<dbReference type="TreeFam" id="TF350556"/>
<dbReference type="PRO" id="PR:Q90XE6"/>
<dbReference type="Proteomes" id="UP000000437">
    <property type="component" value="Chromosome 6"/>
</dbReference>
<dbReference type="Bgee" id="ENSDARG00000017400">
    <property type="expression patterns" value="Expressed in cardiac ventricle and 13 other cell types or tissues"/>
</dbReference>
<dbReference type="GO" id="GO:0000785">
    <property type="term" value="C:chromatin"/>
    <property type="evidence" value="ECO:0000314"/>
    <property type="project" value="UniProtKB"/>
</dbReference>
<dbReference type="GO" id="GO:0005829">
    <property type="term" value="C:cytosol"/>
    <property type="evidence" value="ECO:0007669"/>
    <property type="project" value="UniProtKB-SubCell"/>
</dbReference>
<dbReference type="GO" id="GO:0005634">
    <property type="term" value="C:nucleus"/>
    <property type="evidence" value="ECO:0000305"/>
    <property type="project" value="ZFIN"/>
</dbReference>
<dbReference type="GO" id="GO:0003700">
    <property type="term" value="F:DNA-binding transcription factor activity"/>
    <property type="evidence" value="ECO:0000314"/>
    <property type="project" value="ZFIN"/>
</dbReference>
<dbReference type="GO" id="GO:0000981">
    <property type="term" value="F:DNA-binding transcription factor activity, RNA polymerase II-specific"/>
    <property type="evidence" value="ECO:0000315"/>
    <property type="project" value="UniProtKB"/>
</dbReference>
<dbReference type="GO" id="GO:0000978">
    <property type="term" value="F:RNA polymerase II cis-regulatory region sequence-specific DNA binding"/>
    <property type="evidence" value="ECO:0000315"/>
    <property type="project" value="UniProtKB"/>
</dbReference>
<dbReference type="GO" id="GO:0043565">
    <property type="term" value="F:sequence-specific DNA binding"/>
    <property type="evidence" value="ECO:0000314"/>
    <property type="project" value="ZFIN"/>
</dbReference>
<dbReference type="GO" id="GO:0008270">
    <property type="term" value="F:zinc ion binding"/>
    <property type="evidence" value="ECO:0007669"/>
    <property type="project" value="UniProtKB-KW"/>
</dbReference>
<dbReference type="GO" id="GO:0031100">
    <property type="term" value="P:animal organ regeneration"/>
    <property type="evidence" value="ECO:0000315"/>
    <property type="project" value="UniProtKB"/>
</dbReference>
<dbReference type="GO" id="GO:0055007">
    <property type="term" value="P:cardiac muscle cell differentiation"/>
    <property type="evidence" value="ECO:0000315"/>
    <property type="project" value="UniProtKB"/>
</dbReference>
<dbReference type="GO" id="GO:0060038">
    <property type="term" value="P:cardiac muscle cell proliferation"/>
    <property type="evidence" value="ECO:0000315"/>
    <property type="project" value="UniProtKB"/>
</dbReference>
<dbReference type="GO" id="GO:0043697">
    <property type="term" value="P:cell dedifferentiation"/>
    <property type="evidence" value="ECO:0000315"/>
    <property type="project" value="UniProtKB"/>
</dbReference>
<dbReference type="GO" id="GO:0010628">
    <property type="term" value="P:positive regulation of gene expression"/>
    <property type="evidence" value="ECO:0000314"/>
    <property type="project" value="ZFIN"/>
</dbReference>
<dbReference type="GO" id="GO:0060319">
    <property type="term" value="P:primitive erythrocyte differentiation"/>
    <property type="evidence" value="ECO:0000270"/>
    <property type="project" value="ZFIN"/>
</dbReference>
<dbReference type="GO" id="GO:0010725">
    <property type="term" value="P:regulation of primitive erythrocyte differentiation"/>
    <property type="evidence" value="ECO:0000316"/>
    <property type="project" value="ZFIN"/>
</dbReference>
<dbReference type="GO" id="GO:0006357">
    <property type="term" value="P:regulation of transcription by RNA polymerase II"/>
    <property type="evidence" value="ECO:0000315"/>
    <property type="project" value="UniProtKB"/>
</dbReference>
<dbReference type="GO" id="GO:0045214">
    <property type="term" value="P:sarcomere organization"/>
    <property type="evidence" value="ECO:0000315"/>
    <property type="project" value="UniProtKB"/>
</dbReference>
<dbReference type="CDD" id="cd21581">
    <property type="entry name" value="KLF1_N"/>
    <property type="match status" value="1"/>
</dbReference>
<dbReference type="FunFam" id="3.30.160.60:FF:000032">
    <property type="entry name" value="Krueppel-like factor 4"/>
    <property type="match status" value="1"/>
</dbReference>
<dbReference type="Gene3D" id="3.30.160.60">
    <property type="entry name" value="Classic Zinc Finger"/>
    <property type="match status" value="3"/>
</dbReference>
<dbReference type="InterPro" id="IPR036236">
    <property type="entry name" value="Znf_C2H2_sf"/>
</dbReference>
<dbReference type="InterPro" id="IPR013087">
    <property type="entry name" value="Znf_C2H2_type"/>
</dbReference>
<dbReference type="PANTHER" id="PTHR23235">
    <property type="entry name" value="KRUEPPEL-LIKE TRANSCRIPTION FACTOR"/>
    <property type="match status" value="1"/>
</dbReference>
<dbReference type="PANTHER" id="PTHR23235:SF145">
    <property type="entry name" value="KRUPPEL-LIKE FACTOR 1"/>
    <property type="match status" value="1"/>
</dbReference>
<dbReference type="Pfam" id="PF00096">
    <property type="entry name" value="zf-C2H2"/>
    <property type="match status" value="3"/>
</dbReference>
<dbReference type="SMART" id="SM00355">
    <property type="entry name" value="ZnF_C2H2"/>
    <property type="match status" value="3"/>
</dbReference>
<dbReference type="SUPFAM" id="SSF57667">
    <property type="entry name" value="beta-beta-alpha zinc fingers"/>
    <property type="match status" value="2"/>
</dbReference>
<dbReference type="PROSITE" id="PS00028">
    <property type="entry name" value="ZINC_FINGER_C2H2_1"/>
    <property type="match status" value="3"/>
</dbReference>
<dbReference type="PROSITE" id="PS50157">
    <property type="entry name" value="ZINC_FINGER_C2H2_2"/>
    <property type="match status" value="3"/>
</dbReference>
<reference evidence="12" key="1">
    <citation type="journal article" date="2001" name="Blood">
        <title>The zebrafish klf gene family.</title>
        <authorList>
            <person name="Oates A.C."/>
            <person name="Pratt S.J."/>
            <person name="Vail B."/>
            <person name="Yan Y.L."/>
            <person name="Ho R.K."/>
            <person name="Johnson S.L."/>
            <person name="Postlethwait J.H."/>
            <person name="Zon L.I."/>
        </authorList>
    </citation>
    <scope>NUCLEOTIDE SEQUENCE [MRNA]</scope>
    <scope>DEVELOPMENTAL STAGE</scope>
    <source>
        <tissue evidence="12">Kidney</tissue>
    </source>
</reference>
<reference evidence="13" key="2">
    <citation type="journal article" date="2013" name="Nature">
        <title>The zebrafish reference genome sequence and its relationship to the human genome.</title>
        <authorList>
            <person name="Howe K."/>
            <person name="Clark M.D."/>
            <person name="Torroja C.F."/>
            <person name="Torrance J."/>
            <person name="Berthelot C."/>
            <person name="Muffato M."/>
            <person name="Collins J.E."/>
            <person name="Humphray S."/>
            <person name="McLaren K."/>
            <person name="Matthews L."/>
            <person name="McLaren S."/>
            <person name="Sealy I."/>
            <person name="Caccamo M."/>
            <person name="Churcher C."/>
            <person name="Scott C."/>
            <person name="Barrett J.C."/>
            <person name="Koch R."/>
            <person name="Rauch G.J."/>
            <person name="White S."/>
            <person name="Chow W."/>
            <person name="Kilian B."/>
            <person name="Quintais L.T."/>
            <person name="Guerra-Assuncao J.A."/>
            <person name="Zhou Y."/>
            <person name="Gu Y."/>
            <person name="Yen J."/>
            <person name="Vogel J.H."/>
            <person name="Eyre T."/>
            <person name="Redmond S."/>
            <person name="Banerjee R."/>
            <person name="Chi J."/>
            <person name="Fu B."/>
            <person name="Langley E."/>
            <person name="Maguire S.F."/>
            <person name="Laird G.K."/>
            <person name="Lloyd D."/>
            <person name="Kenyon E."/>
            <person name="Donaldson S."/>
            <person name="Sehra H."/>
            <person name="Almeida-King J."/>
            <person name="Loveland J."/>
            <person name="Trevanion S."/>
            <person name="Jones M."/>
            <person name="Quail M."/>
            <person name="Willey D."/>
            <person name="Hunt A."/>
            <person name="Burton J."/>
            <person name="Sims S."/>
            <person name="McLay K."/>
            <person name="Plumb B."/>
            <person name="Davis J."/>
            <person name="Clee C."/>
            <person name="Oliver K."/>
            <person name="Clark R."/>
            <person name="Riddle C."/>
            <person name="Elliot D."/>
            <person name="Threadgold G."/>
            <person name="Harden G."/>
            <person name="Ware D."/>
            <person name="Begum S."/>
            <person name="Mortimore B."/>
            <person name="Kerry G."/>
            <person name="Heath P."/>
            <person name="Phillimore B."/>
            <person name="Tracey A."/>
            <person name="Corby N."/>
            <person name="Dunn M."/>
            <person name="Johnson C."/>
            <person name="Wood J."/>
            <person name="Clark S."/>
            <person name="Pelan S."/>
            <person name="Griffiths G."/>
            <person name="Smith M."/>
            <person name="Glithero R."/>
            <person name="Howden P."/>
            <person name="Barker N."/>
            <person name="Lloyd C."/>
            <person name="Stevens C."/>
            <person name="Harley J."/>
            <person name="Holt K."/>
            <person name="Panagiotidis G."/>
            <person name="Lovell J."/>
            <person name="Beasley H."/>
            <person name="Henderson C."/>
            <person name="Gordon D."/>
            <person name="Auger K."/>
            <person name="Wright D."/>
            <person name="Collins J."/>
            <person name="Raisen C."/>
            <person name="Dyer L."/>
            <person name="Leung K."/>
            <person name="Robertson L."/>
            <person name="Ambridge K."/>
            <person name="Leongamornlert D."/>
            <person name="McGuire S."/>
            <person name="Gilderthorp R."/>
            <person name="Griffiths C."/>
            <person name="Manthravadi D."/>
            <person name="Nichol S."/>
            <person name="Barker G."/>
            <person name="Whitehead S."/>
            <person name="Kay M."/>
            <person name="Brown J."/>
            <person name="Murnane C."/>
            <person name="Gray E."/>
            <person name="Humphries M."/>
            <person name="Sycamore N."/>
            <person name="Barker D."/>
            <person name="Saunders D."/>
            <person name="Wallis J."/>
            <person name="Babbage A."/>
            <person name="Hammond S."/>
            <person name="Mashreghi-Mohammadi M."/>
            <person name="Barr L."/>
            <person name="Martin S."/>
            <person name="Wray P."/>
            <person name="Ellington A."/>
            <person name="Matthews N."/>
            <person name="Ellwood M."/>
            <person name="Woodmansey R."/>
            <person name="Clark G."/>
            <person name="Cooper J."/>
            <person name="Tromans A."/>
            <person name="Grafham D."/>
            <person name="Skuce C."/>
            <person name="Pandian R."/>
            <person name="Andrews R."/>
            <person name="Harrison E."/>
            <person name="Kimberley A."/>
            <person name="Garnett J."/>
            <person name="Fosker N."/>
            <person name="Hall R."/>
            <person name="Garner P."/>
            <person name="Kelly D."/>
            <person name="Bird C."/>
            <person name="Palmer S."/>
            <person name="Gehring I."/>
            <person name="Berger A."/>
            <person name="Dooley C.M."/>
            <person name="Ersan-Urun Z."/>
            <person name="Eser C."/>
            <person name="Geiger H."/>
            <person name="Geisler M."/>
            <person name="Karotki L."/>
            <person name="Kirn A."/>
            <person name="Konantz J."/>
            <person name="Konantz M."/>
            <person name="Oberlander M."/>
            <person name="Rudolph-Geiger S."/>
            <person name="Teucke M."/>
            <person name="Lanz C."/>
            <person name="Raddatz G."/>
            <person name="Osoegawa K."/>
            <person name="Zhu B."/>
            <person name="Rapp A."/>
            <person name="Widaa S."/>
            <person name="Langford C."/>
            <person name="Yang F."/>
            <person name="Schuster S.C."/>
            <person name="Carter N.P."/>
            <person name="Harrow J."/>
            <person name="Ning Z."/>
            <person name="Herrero J."/>
            <person name="Searle S.M."/>
            <person name="Enright A."/>
            <person name="Geisler R."/>
            <person name="Plasterk R.H."/>
            <person name="Lee C."/>
            <person name="Westerfield M."/>
            <person name="de Jong P.J."/>
            <person name="Zon L.I."/>
            <person name="Postlethwait J.H."/>
            <person name="Nusslein-Volhard C."/>
            <person name="Hubbard T.J."/>
            <person name="Roest Crollius H."/>
            <person name="Rogers J."/>
            <person name="Stemple D.L."/>
        </authorList>
    </citation>
    <scope>NUCLEOTIDE SEQUENCE [LARGE SCALE GENOMIC DNA]</scope>
    <source>
        <strain evidence="13">Tuebingen</strain>
    </source>
</reference>
<reference evidence="11" key="3">
    <citation type="submission" date="2008-04" db="EMBL/GenBank/DDBJ databases">
        <authorList>
            <consortium name="NIH - Zebrafish Gene Collection (ZGC) project"/>
        </authorList>
    </citation>
    <scope>NUCLEOTIDE SEQUENCE [LARGE SCALE MRNA]</scope>
</reference>
<reference evidence="8" key="4">
    <citation type="journal article" date="2009" name="Blood">
        <title>Mir-144 selectively regulates embryonic alpha-hemoglobin synthesis during primitive erythropoiesis.</title>
        <authorList>
            <person name="Fu Y.F."/>
            <person name="Du T.T."/>
            <person name="Dong M."/>
            <person name="Zhu K.Y."/>
            <person name="Jing C.B."/>
            <person name="Zhang Y."/>
            <person name="Wang L."/>
            <person name="Fan H.B."/>
            <person name="Chen Y."/>
            <person name="Jin Y."/>
            <person name="Yue G.P."/>
            <person name="Chen S.J."/>
            <person name="Chen Z."/>
            <person name="Huang Q.H."/>
            <person name="Jing Q."/>
            <person name="Deng M."/>
            <person name="Liu T.X."/>
        </authorList>
    </citation>
    <scope>FUNCTION</scope>
    <scope>DEVELOPMENTAL STAGE</scope>
    <scope>DISRUPTION PHENOTYPE</scope>
    <scope>REPRESSION BY MIR-144</scope>
</reference>
<reference evidence="8" key="5">
    <citation type="journal article" date="2021" name="Science">
        <title>Krueppel-like factor 1 is a core cardiomyogenic trigger in zebrafish.</title>
        <authorList>
            <person name="Ogawa M."/>
            <person name="Geng F.S."/>
            <person name="Humphreys D.T."/>
            <person name="Kristianto E."/>
            <person name="Sheng D.Z."/>
            <person name="Hui S.P."/>
            <person name="Zhang Y."/>
            <person name="Sugimoto K."/>
            <person name="Nakayama M."/>
            <person name="Zheng D."/>
            <person name="Hesselson D."/>
            <person name="Hodson M.P."/>
            <person name="Bogdanovic O."/>
            <person name="Kikuchi K."/>
        </authorList>
    </citation>
    <scope>FUNCTION</scope>
    <scope>SUBCELLULAR LOCATION</scope>
    <scope>TISSUE SPECIFICITY</scope>
    <scope>INDUCTION BY INJURY</scope>
</reference>
<keyword id="KW-0010">Activator</keyword>
<keyword id="KW-0963">Cytoplasm</keyword>
<keyword id="KW-0238">DNA-binding</keyword>
<keyword id="KW-0479">Metal-binding</keyword>
<keyword id="KW-0539">Nucleus</keyword>
<keyword id="KW-1185">Reference proteome</keyword>
<keyword id="KW-0677">Repeat</keyword>
<keyword id="KW-0678">Repressor</keyword>
<keyword id="KW-0804">Transcription</keyword>
<keyword id="KW-0805">Transcription regulation</keyword>
<keyword id="KW-0862">Zinc</keyword>
<keyword id="KW-0863">Zinc-finger</keyword>
<gene>
    <name evidence="14" type="primary">klf1</name>
    <name evidence="7" type="synonym">eklf</name>
    <name evidence="12" type="synonym">klfd</name>
</gene>
<feature type="chain" id="PRO_0000453283" description="Kruppel-like factor 1">
    <location>
        <begin position="1"/>
        <end position="365"/>
    </location>
</feature>
<feature type="zinc finger region" description="C2H2-type 1" evidence="1">
    <location>
        <begin position="282"/>
        <end position="306"/>
    </location>
</feature>
<feature type="zinc finger region" description="C2H2-type 2" evidence="1">
    <location>
        <begin position="312"/>
        <end position="336"/>
    </location>
</feature>
<feature type="zinc finger region" description="C2H2-type 3" evidence="1">
    <location>
        <begin position="342"/>
        <end position="364"/>
    </location>
</feature>
<feature type="region of interest" description="Disordered" evidence="2">
    <location>
        <begin position="243"/>
        <end position="264"/>
    </location>
</feature>
<feature type="compositionally biased region" description="Polar residues" evidence="2">
    <location>
        <begin position="247"/>
        <end position="256"/>
    </location>
</feature>
<evidence type="ECO:0000255" key="1">
    <source>
        <dbReference type="PROSITE-ProRule" id="PRU00042"/>
    </source>
</evidence>
<evidence type="ECO:0000256" key="2">
    <source>
        <dbReference type="SAM" id="MobiDB-lite"/>
    </source>
</evidence>
<evidence type="ECO:0000269" key="3">
    <source>
    </source>
</evidence>
<evidence type="ECO:0000269" key="4">
    <source>
    </source>
</evidence>
<evidence type="ECO:0000269" key="5">
    <source>
    </source>
</evidence>
<evidence type="ECO:0000303" key="6">
    <source>
    </source>
</evidence>
<evidence type="ECO:0000303" key="7">
    <source>
    </source>
</evidence>
<evidence type="ECO:0000305" key="8"/>
<evidence type="ECO:0000305" key="9">
    <source>
    </source>
</evidence>
<evidence type="ECO:0000305" key="10">
    <source>
    </source>
</evidence>
<evidence type="ECO:0000312" key="11">
    <source>
        <dbReference type="EMBL" id="AAI62384.1"/>
    </source>
</evidence>
<evidence type="ECO:0000312" key="12">
    <source>
        <dbReference type="EMBL" id="AAK76995.1"/>
    </source>
</evidence>
<evidence type="ECO:0000312" key="13">
    <source>
        <dbReference type="Proteomes" id="UP000000437"/>
    </source>
</evidence>
<evidence type="ECO:0000312" key="14">
    <source>
        <dbReference type="ZFIN" id="ZDB-GENE-980526-55"/>
    </source>
</evidence>
<protein>
    <recommendedName>
        <fullName evidence="6">Kruppel-like factor 1</fullName>
    </recommendedName>
    <alternativeName>
        <fullName evidence="14">Erythroid krueppel-like transcription factor</fullName>
    </alternativeName>
    <alternativeName>
        <fullName evidence="14">Kruppel-like factor d</fullName>
    </alternativeName>
</protein>
<proteinExistence type="evidence at transcript level"/>
<sequence length="365" mass="41687">MAVTQAVLPSFSNFCTNSENMKFEKGFLDLDSKDLHQSPASYKPSQFLTDEHQDDSEGCWDMEFLLSDWASMSPERSNSQNYTPQRPTLQDQLHSPDLYQELNAPKPNRHQVCVASSLAELLPPEATLSSSLPPDLQFNCGFLDQQAAKSYSQAENPQQFSAFPVTSNVNRDSSMGKMGKSWDFGHYYQPAPLISFPDSKFVQTQGITMETVVFPPHHHYNFIPSYSHPRLYQQQANYVHRPPPQSHFPSTQSMVPDSTVPPAGLESKRIRRGLVKRKATVHSCEYPGCQKTYTKSSHLKAHLRTHTGEKPYHCTWDGCGWKFARSDELTRHFRKHTGQKPYECLLCHRAFSRSDHLALHMKRHV</sequence>
<organism evidence="13">
    <name type="scientific">Danio rerio</name>
    <name type="common">Zebrafish</name>
    <name type="synonym">Brachydanio rerio</name>
    <dbReference type="NCBI Taxonomy" id="7955"/>
    <lineage>
        <taxon>Eukaryota</taxon>
        <taxon>Metazoa</taxon>
        <taxon>Chordata</taxon>
        <taxon>Craniata</taxon>
        <taxon>Vertebrata</taxon>
        <taxon>Euteleostomi</taxon>
        <taxon>Actinopterygii</taxon>
        <taxon>Neopterygii</taxon>
        <taxon>Teleostei</taxon>
        <taxon>Ostariophysi</taxon>
        <taxon>Cypriniformes</taxon>
        <taxon>Danionidae</taxon>
        <taxon>Danioninae</taxon>
        <taxon>Danio</taxon>
    </lineage>
</organism>
<accession>Q90XE6</accession>
<name>KLF1_DANRE</name>